<comment type="function">
    <text evidence="1">Carrier of the growing fatty acid chain in fatty acid biosynthesis.</text>
</comment>
<comment type="pathway">
    <text evidence="1">Lipid metabolism; fatty acid biosynthesis.</text>
</comment>
<comment type="subcellular location">
    <subcellularLocation>
        <location evidence="1">Cytoplasm</location>
    </subcellularLocation>
</comment>
<comment type="PTM">
    <text evidence="1">4'-phosphopantetheine is transferred from CoA to a specific serine of apo-ACP by AcpS. This modification is essential for activity because fatty acids are bound in thioester linkage to the sulfhydryl of the prosthetic group.</text>
</comment>
<comment type="similarity">
    <text evidence="1">Belongs to the acyl carrier protein (ACP) family.</text>
</comment>
<protein>
    <recommendedName>
        <fullName evidence="1">Acyl carrier protein</fullName>
        <shortName evidence="1">ACP</shortName>
    </recommendedName>
</protein>
<accession>B8FJ70</accession>
<sequence>MSLEEKVKNIIVDKLGVEPDEVVEEASFVDDLGADSLDLVELIMSMEETFDLEISDEEAEKILKVKDVIEYIKAHT</sequence>
<name>ACP_DESAL</name>
<proteinExistence type="inferred from homology"/>
<evidence type="ECO:0000255" key="1">
    <source>
        <dbReference type="HAMAP-Rule" id="MF_01217"/>
    </source>
</evidence>
<evidence type="ECO:0000255" key="2">
    <source>
        <dbReference type="PROSITE-ProRule" id="PRU00258"/>
    </source>
</evidence>
<dbReference type="EMBL" id="CP001322">
    <property type="protein sequence ID" value="ACL04997.1"/>
    <property type="molecule type" value="Genomic_DNA"/>
</dbReference>
<dbReference type="RefSeq" id="WP_015948056.1">
    <property type="nucleotide sequence ID" value="NC_011768.1"/>
</dbReference>
<dbReference type="SMR" id="B8FJ70"/>
<dbReference type="KEGG" id="dal:Dalk_3308"/>
<dbReference type="eggNOG" id="COG0236">
    <property type="taxonomic scope" value="Bacteria"/>
</dbReference>
<dbReference type="HOGENOM" id="CLU_108696_5_1_7"/>
<dbReference type="UniPathway" id="UPA00094"/>
<dbReference type="Proteomes" id="UP000000739">
    <property type="component" value="Chromosome"/>
</dbReference>
<dbReference type="GO" id="GO:0005829">
    <property type="term" value="C:cytosol"/>
    <property type="evidence" value="ECO:0007669"/>
    <property type="project" value="TreeGrafter"/>
</dbReference>
<dbReference type="GO" id="GO:0016020">
    <property type="term" value="C:membrane"/>
    <property type="evidence" value="ECO:0007669"/>
    <property type="project" value="GOC"/>
</dbReference>
<dbReference type="GO" id="GO:0000035">
    <property type="term" value="F:acyl binding"/>
    <property type="evidence" value="ECO:0007669"/>
    <property type="project" value="TreeGrafter"/>
</dbReference>
<dbReference type="GO" id="GO:0000036">
    <property type="term" value="F:acyl carrier activity"/>
    <property type="evidence" value="ECO:0007669"/>
    <property type="project" value="UniProtKB-UniRule"/>
</dbReference>
<dbReference type="GO" id="GO:0009245">
    <property type="term" value="P:lipid A biosynthetic process"/>
    <property type="evidence" value="ECO:0007669"/>
    <property type="project" value="TreeGrafter"/>
</dbReference>
<dbReference type="FunFam" id="1.10.1200.10:FF:000001">
    <property type="entry name" value="Acyl carrier protein"/>
    <property type="match status" value="1"/>
</dbReference>
<dbReference type="Gene3D" id="1.10.1200.10">
    <property type="entry name" value="ACP-like"/>
    <property type="match status" value="1"/>
</dbReference>
<dbReference type="HAMAP" id="MF_01217">
    <property type="entry name" value="Acyl_carrier"/>
    <property type="match status" value="1"/>
</dbReference>
<dbReference type="InterPro" id="IPR003231">
    <property type="entry name" value="ACP"/>
</dbReference>
<dbReference type="InterPro" id="IPR036736">
    <property type="entry name" value="ACP-like_sf"/>
</dbReference>
<dbReference type="InterPro" id="IPR009081">
    <property type="entry name" value="PP-bd_ACP"/>
</dbReference>
<dbReference type="InterPro" id="IPR006162">
    <property type="entry name" value="Ppantetheine_attach_site"/>
</dbReference>
<dbReference type="NCBIfam" id="TIGR00517">
    <property type="entry name" value="acyl_carrier"/>
    <property type="match status" value="1"/>
</dbReference>
<dbReference type="NCBIfam" id="NF002148">
    <property type="entry name" value="PRK00982.1-2"/>
    <property type="match status" value="1"/>
</dbReference>
<dbReference type="NCBIfam" id="NF002149">
    <property type="entry name" value="PRK00982.1-3"/>
    <property type="match status" value="1"/>
</dbReference>
<dbReference type="NCBIfam" id="NF002150">
    <property type="entry name" value="PRK00982.1-4"/>
    <property type="match status" value="1"/>
</dbReference>
<dbReference type="NCBIfam" id="NF002151">
    <property type="entry name" value="PRK00982.1-5"/>
    <property type="match status" value="1"/>
</dbReference>
<dbReference type="PANTHER" id="PTHR20863">
    <property type="entry name" value="ACYL CARRIER PROTEIN"/>
    <property type="match status" value="1"/>
</dbReference>
<dbReference type="PANTHER" id="PTHR20863:SF76">
    <property type="entry name" value="CARRIER DOMAIN-CONTAINING PROTEIN"/>
    <property type="match status" value="1"/>
</dbReference>
<dbReference type="Pfam" id="PF00550">
    <property type="entry name" value="PP-binding"/>
    <property type="match status" value="1"/>
</dbReference>
<dbReference type="SUPFAM" id="SSF47336">
    <property type="entry name" value="ACP-like"/>
    <property type="match status" value="1"/>
</dbReference>
<dbReference type="PROSITE" id="PS50075">
    <property type="entry name" value="CARRIER"/>
    <property type="match status" value="1"/>
</dbReference>
<dbReference type="PROSITE" id="PS00012">
    <property type="entry name" value="PHOSPHOPANTETHEINE"/>
    <property type="match status" value="1"/>
</dbReference>
<gene>
    <name evidence="1" type="primary">acpP</name>
    <name type="ordered locus">Dalk_3308</name>
</gene>
<organism>
    <name type="scientific">Desulfatibacillum aliphaticivorans</name>
    <dbReference type="NCBI Taxonomy" id="218208"/>
    <lineage>
        <taxon>Bacteria</taxon>
        <taxon>Pseudomonadati</taxon>
        <taxon>Thermodesulfobacteriota</taxon>
        <taxon>Desulfobacteria</taxon>
        <taxon>Desulfobacterales</taxon>
        <taxon>Desulfatibacillaceae</taxon>
        <taxon>Desulfatibacillum</taxon>
    </lineage>
</organism>
<reference key="1">
    <citation type="journal article" date="2012" name="Environ. Microbiol.">
        <title>The genome sequence of Desulfatibacillum alkenivorans AK-01: a blueprint for anaerobic alkane oxidation.</title>
        <authorList>
            <person name="Callaghan A.V."/>
            <person name="Morris B.E."/>
            <person name="Pereira I.A."/>
            <person name="McInerney M.J."/>
            <person name="Austin R.N."/>
            <person name="Groves J.T."/>
            <person name="Kukor J.J."/>
            <person name="Suflita J.M."/>
            <person name="Young L.Y."/>
            <person name="Zylstra G.J."/>
            <person name="Wawrik B."/>
        </authorList>
    </citation>
    <scope>NUCLEOTIDE SEQUENCE [LARGE SCALE GENOMIC DNA]</scope>
    <source>
        <strain>AK-01</strain>
    </source>
</reference>
<keyword id="KW-0963">Cytoplasm</keyword>
<keyword id="KW-0275">Fatty acid biosynthesis</keyword>
<keyword id="KW-0276">Fatty acid metabolism</keyword>
<keyword id="KW-0444">Lipid biosynthesis</keyword>
<keyword id="KW-0443">Lipid metabolism</keyword>
<keyword id="KW-0596">Phosphopantetheine</keyword>
<keyword id="KW-0597">Phosphoprotein</keyword>
<keyword id="KW-1185">Reference proteome</keyword>
<feature type="chain" id="PRO_1000139018" description="Acyl carrier protein">
    <location>
        <begin position="1"/>
        <end position="76"/>
    </location>
</feature>
<feature type="domain" description="Carrier" evidence="2">
    <location>
        <begin position="1"/>
        <end position="76"/>
    </location>
</feature>
<feature type="modified residue" description="O-(pantetheine 4'-phosphoryl)serine" evidence="2">
    <location>
        <position position="36"/>
    </location>
</feature>